<organism>
    <name type="scientific">Clostridium novyi (strain NT)</name>
    <dbReference type="NCBI Taxonomy" id="386415"/>
    <lineage>
        <taxon>Bacteria</taxon>
        <taxon>Bacillati</taxon>
        <taxon>Bacillota</taxon>
        <taxon>Clostridia</taxon>
        <taxon>Eubacteriales</taxon>
        <taxon>Clostridiaceae</taxon>
        <taxon>Clostridium</taxon>
    </lineage>
</organism>
<proteinExistence type="inferred from homology"/>
<comment type="function">
    <text evidence="1">Binds together with bS18 to 16S ribosomal RNA.</text>
</comment>
<comment type="similarity">
    <text evidence="1">Belongs to the bacterial ribosomal protein bS6 family.</text>
</comment>
<evidence type="ECO:0000255" key="1">
    <source>
        <dbReference type="HAMAP-Rule" id="MF_00360"/>
    </source>
</evidence>
<evidence type="ECO:0000305" key="2"/>
<dbReference type="EMBL" id="CP000382">
    <property type="protein sequence ID" value="ABK62068.1"/>
    <property type="molecule type" value="Genomic_DNA"/>
</dbReference>
<dbReference type="RefSeq" id="WP_011721010.1">
    <property type="nucleotide sequence ID" value="NC_008593.1"/>
</dbReference>
<dbReference type="SMR" id="A0PX87"/>
<dbReference type="STRING" id="386415.NT01CX_0883"/>
<dbReference type="KEGG" id="cno:NT01CX_0883"/>
<dbReference type="eggNOG" id="COG0360">
    <property type="taxonomic scope" value="Bacteria"/>
</dbReference>
<dbReference type="HOGENOM" id="CLU_113441_5_1_9"/>
<dbReference type="Proteomes" id="UP000008220">
    <property type="component" value="Chromosome"/>
</dbReference>
<dbReference type="GO" id="GO:0005737">
    <property type="term" value="C:cytoplasm"/>
    <property type="evidence" value="ECO:0007669"/>
    <property type="project" value="UniProtKB-ARBA"/>
</dbReference>
<dbReference type="GO" id="GO:1990904">
    <property type="term" value="C:ribonucleoprotein complex"/>
    <property type="evidence" value="ECO:0007669"/>
    <property type="project" value="UniProtKB-KW"/>
</dbReference>
<dbReference type="GO" id="GO:0005840">
    <property type="term" value="C:ribosome"/>
    <property type="evidence" value="ECO:0007669"/>
    <property type="project" value="UniProtKB-KW"/>
</dbReference>
<dbReference type="GO" id="GO:0070181">
    <property type="term" value="F:small ribosomal subunit rRNA binding"/>
    <property type="evidence" value="ECO:0007669"/>
    <property type="project" value="TreeGrafter"/>
</dbReference>
<dbReference type="GO" id="GO:0003735">
    <property type="term" value="F:structural constituent of ribosome"/>
    <property type="evidence" value="ECO:0007669"/>
    <property type="project" value="InterPro"/>
</dbReference>
<dbReference type="GO" id="GO:0006412">
    <property type="term" value="P:translation"/>
    <property type="evidence" value="ECO:0007669"/>
    <property type="project" value="UniProtKB-UniRule"/>
</dbReference>
<dbReference type="CDD" id="cd00473">
    <property type="entry name" value="bS6"/>
    <property type="match status" value="1"/>
</dbReference>
<dbReference type="FunFam" id="3.30.70.60:FF:000002">
    <property type="entry name" value="30S ribosomal protein S6"/>
    <property type="match status" value="1"/>
</dbReference>
<dbReference type="Gene3D" id="3.30.70.60">
    <property type="match status" value="1"/>
</dbReference>
<dbReference type="HAMAP" id="MF_00360">
    <property type="entry name" value="Ribosomal_bS6"/>
    <property type="match status" value="1"/>
</dbReference>
<dbReference type="InterPro" id="IPR000529">
    <property type="entry name" value="Ribosomal_bS6"/>
</dbReference>
<dbReference type="InterPro" id="IPR035980">
    <property type="entry name" value="Ribosomal_bS6_sf"/>
</dbReference>
<dbReference type="InterPro" id="IPR020814">
    <property type="entry name" value="Ribosomal_S6_plastid/chlpt"/>
</dbReference>
<dbReference type="InterPro" id="IPR014717">
    <property type="entry name" value="Transl_elong_EF1B/ribsomal_bS6"/>
</dbReference>
<dbReference type="NCBIfam" id="TIGR00166">
    <property type="entry name" value="S6"/>
    <property type="match status" value="1"/>
</dbReference>
<dbReference type="PANTHER" id="PTHR21011">
    <property type="entry name" value="MITOCHONDRIAL 28S RIBOSOMAL PROTEIN S6"/>
    <property type="match status" value="1"/>
</dbReference>
<dbReference type="PANTHER" id="PTHR21011:SF1">
    <property type="entry name" value="SMALL RIBOSOMAL SUBUNIT PROTEIN BS6M"/>
    <property type="match status" value="1"/>
</dbReference>
<dbReference type="Pfam" id="PF01250">
    <property type="entry name" value="Ribosomal_S6"/>
    <property type="match status" value="1"/>
</dbReference>
<dbReference type="SUPFAM" id="SSF54995">
    <property type="entry name" value="Ribosomal protein S6"/>
    <property type="match status" value="1"/>
</dbReference>
<name>RS6_CLONN</name>
<reference key="1">
    <citation type="journal article" date="2006" name="Nat. Biotechnol.">
        <title>The genome and transcriptomes of the anti-tumor agent Clostridium novyi-NT.</title>
        <authorList>
            <person name="Bettegowda C."/>
            <person name="Huang X."/>
            <person name="Lin J."/>
            <person name="Cheong I."/>
            <person name="Kohli M."/>
            <person name="Szabo S.A."/>
            <person name="Zhang X."/>
            <person name="Diaz L.A. Jr."/>
            <person name="Velculescu V.E."/>
            <person name="Parmigiani G."/>
            <person name="Kinzler K.W."/>
            <person name="Vogelstein B."/>
            <person name="Zhou S."/>
        </authorList>
    </citation>
    <scope>NUCLEOTIDE SEQUENCE [LARGE SCALE GENOMIC DNA]</scope>
    <source>
        <strain>NT</strain>
    </source>
</reference>
<protein>
    <recommendedName>
        <fullName evidence="1">Small ribosomal subunit protein bS6</fullName>
    </recommendedName>
    <alternativeName>
        <fullName evidence="2">30S ribosomal protein S6</fullName>
    </alternativeName>
</protein>
<gene>
    <name evidence="1" type="primary">rpsF</name>
    <name type="ordered locus">NT01CX_0883</name>
</gene>
<sequence length="95" mass="11080">MRNYETLFILNPSLDEEATKAAIEKFKGVIEKEGGVVENVDEWGRRKLAYPINKVNEGYYTLINFKANPELPRELERVFRITDGVMRFMVVNPEK</sequence>
<accession>A0PX87</accession>
<keyword id="KW-1185">Reference proteome</keyword>
<keyword id="KW-0687">Ribonucleoprotein</keyword>
<keyword id="KW-0689">Ribosomal protein</keyword>
<keyword id="KW-0694">RNA-binding</keyword>
<keyword id="KW-0699">rRNA-binding</keyword>
<feature type="chain" id="PRO_1000005251" description="Small ribosomal subunit protein bS6">
    <location>
        <begin position="1"/>
        <end position="95"/>
    </location>
</feature>